<name>Y7588_DICDI</name>
<reference key="1">
    <citation type="journal article" date="2005" name="Nature">
        <title>The genome of the social amoeba Dictyostelium discoideum.</title>
        <authorList>
            <person name="Eichinger L."/>
            <person name="Pachebat J.A."/>
            <person name="Gloeckner G."/>
            <person name="Rajandream M.A."/>
            <person name="Sucgang R."/>
            <person name="Berriman M."/>
            <person name="Song J."/>
            <person name="Olsen R."/>
            <person name="Szafranski K."/>
            <person name="Xu Q."/>
            <person name="Tunggal B."/>
            <person name="Kummerfeld S."/>
            <person name="Madera M."/>
            <person name="Konfortov B.A."/>
            <person name="Rivero F."/>
            <person name="Bankier A.T."/>
            <person name="Lehmann R."/>
            <person name="Hamlin N."/>
            <person name="Davies R."/>
            <person name="Gaudet P."/>
            <person name="Fey P."/>
            <person name="Pilcher K."/>
            <person name="Chen G."/>
            <person name="Saunders D."/>
            <person name="Sodergren E.J."/>
            <person name="Davis P."/>
            <person name="Kerhornou A."/>
            <person name="Nie X."/>
            <person name="Hall N."/>
            <person name="Anjard C."/>
            <person name="Hemphill L."/>
            <person name="Bason N."/>
            <person name="Farbrother P."/>
            <person name="Desany B."/>
            <person name="Just E."/>
            <person name="Morio T."/>
            <person name="Rost R."/>
            <person name="Churcher C.M."/>
            <person name="Cooper J."/>
            <person name="Haydock S."/>
            <person name="van Driessche N."/>
            <person name="Cronin A."/>
            <person name="Goodhead I."/>
            <person name="Muzny D.M."/>
            <person name="Mourier T."/>
            <person name="Pain A."/>
            <person name="Lu M."/>
            <person name="Harper D."/>
            <person name="Lindsay R."/>
            <person name="Hauser H."/>
            <person name="James K.D."/>
            <person name="Quiles M."/>
            <person name="Madan Babu M."/>
            <person name="Saito T."/>
            <person name="Buchrieser C."/>
            <person name="Wardroper A."/>
            <person name="Felder M."/>
            <person name="Thangavelu M."/>
            <person name="Johnson D."/>
            <person name="Knights A."/>
            <person name="Loulseged H."/>
            <person name="Mungall K.L."/>
            <person name="Oliver K."/>
            <person name="Price C."/>
            <person name="Quail M.A."/>
            <person name="Urushihara H."/>
            <person name="Hernandez J."/>
            <person name="Rabbinowitsch E."/>
            <person name="Steffen D."/>
            <person name="Sanders M."/>
            <person name="Ma J."/>
            <person name="Kohara Y."/>
            <person name="Sharp S."/>
            <person name="Simmonds M.N."/>
            <person name="Spiegler S."/>
            <person name="Tivey A."/>
            <person name="Sugano S."/>
            <person name="White B."/>
            <person name="Walker D."/>
            <person name="Woodward J.R."/>
            <person name="Winckler T."/>
            <person name="Tanaka Y."/>
            <person name="Shaulsky G."/>
            <person name="Schleicher M."/>
            <person name="Weinstock G.M."/>
            <person name="Rosenthal A."/>
            <person name="Cox E.C."/>
            <person name="Chisholm R.L."/>
            <person name="Gibbs R.A."/>
            <person name="Loomis W.F."/>
            <person name="Platzer M."/>
            <person name="Kay R.R."/>
            <person name="Williams J.G."/>
            <person name="Dear P.H."/>
            <person name="Noegel A.A."/>
            <person name="Barrell B.G."/>
            <person name="Kuspa A."/>
        </authorList>
    </citation>
    <scope>NUCLEOTIDE SEQUENCE [LARGE SCALE GENOMIC DNA]</scope>
    <source>
        <strain>AX4</strain>
    </source>
</reference>
<reference key="2">
    <citation type="journal article" date="2008" name="Curr. Biol.">
        <title>PIP3-independent activation of TorC2 and PKB at the cell's leading edge mediates chemotaxis.</title>
        <authorList>
            <person name="Kamimura Y."/>
            <person name="Xiong Y."/>
            <person name="Iglesias P.A."/>
            <person name="Hoeller O."/>
            <person name="Bolourani P."/>
            <person name="Devreotes P.N."/>
        </authorList>
    </citation>
    <scope>FUNCTION</scope>
    <scope>PHOSPHORYLATION AT THR-262</scope>
</reference>
<organism>
    <name type="scientific">Dictyostelium discoideum</name>
    <name type="common">Social amoeba</name>
    <dbReference type="NCBI Taxonomy" id="44689"/>
    <lineage>
        <taxon>Eukaryota</taxon>
        <taxon>Amoebozoa</taxon>
        <taxon>Evosea</taxon>
        <taxon>Eumycetozoa</taxon>
        <taxon>Dictyostelia</taxon>
        <taxon>Dictyosteliales</taxon>
        <taxon>Dictyosteliaceae</taxon>
        <taxon>Dictyostelium</taxon>
    </lineage>
</organism>
<proteinExistence type="evidence at protein level"/>
<protein>
    <recommendedName>
        <fullName>Probable phosphatidylinositol phosphate kinase DDB_G0267588</fullName>
        <ecNumber>2.7.1.-</ecNumber>
    </recommendedName>
</protein>
<dbReference type="EC" id="2.7.1.-"/>
<dbReference type="EMBL" id="AAFI02000003">
    <property type="protein sequence ID" value="EAL73247.1"/>
    <property type="molecule type" value="Genomic_DNA"/>
</dbReference>
<dbReference type="RefSeq" id="XP_647148.1">
    <property type="nucleotide sequence ID" value="XM_642056.1"/>
</dbReference>
<dbReference type="SMR" id="Q55GN6"/>
<dbReference type="FunCoup" id="Q55GN6">
    <property type="interactions" value="125"/>
</dbReference>
<dbReference type="STRING" id="44689.Q55GN6"/>
<dbReference type="GlyGen" id="Q55GN6">
    <property type="glycosylation" value="1 site"/>
</dbReference>
<dbReference type="iPTMnet" id="Q55GN6"/>
<dbReference type="PaxDb" id="44689-DDB0234212"/>
<dbReference type="EnsemblProtists" id="EAL73247">
    <property type="protein sequence ID" value="EAL73247"/>
    <property type="gene ID" value="DDB_G0267588"/>
</dbReference>
<dbReference type="GeneID" id="8615951"/>
<dbReference type="KEGG" id="ddi:DDB_G0267588"/>
<dbReference type="dictyBase" id="DDB_G0267588">
    <property type="gene designation" value="pikI"/>
</dbReference>
<dbReference type="VEuPathDB" id="AmoebaDB:DDB_G0267588"/>
<dbReference type="eggNOG" id="KOG0229">
    <property type="taxonomic scope" value="Eukaryota"/>
</dbReference>
<dbReference type="HOGENOM" id="CLU_384720_0_0_1"/>
<dbReference type="InParanoid" id="Q55GN6"/>
<dbReference type="OMA" id="IQESIDW"/>
<dbReference type="PhylomeDB" id="Q55GN6"/>
<dbReference type="Reactome" id="R-DDI-1660499">
    <property type="pathway name" value="Synthesis of PIPs at the plasma membrane"/>
</dbReference>
<dbReference type="Reactome" id="R-DDI-6811555">
    <property type="pathway name" value="PI5P Regulates TP53 Acetylation"/>
</dbReference>
<dbReference type="Reactome" id="R-DDI-6811558">
    <property type="pathway name" value="PI5P, PP2A and IER3 Regulate PI3K/AKT Signaling"/>
</dbReference>
<dbReference type="Reactome" id="R-DDI-8847453">
    <property type="pathway name" value="Synthesis of PIPs in the nucleus"/>
</dbReference>
<dbReference type="Reactome" id="R-DDI-8856828">
    <property type="pathway name" value="Clathrin-mediated endocytosis"/>
</dbReference>
<dbReference type="PRO" id="PR:Q55GN6"/>
<dbReference type="Proteomes" id="UP000002195">
    <property type="component" value="Chromosome 1"/>
</dbReference>
<dbReference type="GO" id="GO:0005886">
    <property type="term" value="C:plasma membrane"/>
    <property type="evidence" value="ECO:0000318"/>
    <property type="project" value="GO_Central"/>
</dbReference>
<dbReference type="GO" id="GO:0016308">
    <property type="term" value="F:1-phosphatidylinositol-4-phosphate 5-kinase activity"/>
    <property type="evidence" value="ECO:0000314"/>
    <property type="project" value="dictyBase"/>
</dbReference>
<dbReference type="GO" id="GO:0005524">
    <property type="term" value="F:ATP binding"/>
    <property type="evidence" value="ECO:0007669"/>
    <property type="project" value="UniProtKB-KW"/>
</dbReference>
<dbReference type="GO" id="GO:0052742">
    <property type="term" value="F:phosphatidylinositol kinase activity"/>
    <property type="evidence" value="ECO:0000250"/>
    <property type="project" value="dictyBase"/>
</dbReference>
<dbReference type="GO" id="GO:0019887">
    <property type="term" value="F:protein kinase regulator activity"/>
    <property type="evidence" value="ECO:0000314"/>
    <property type="project" value="dictyBase"/>
</dbReference>
<dbReference type="GO" id="GO:1902635">
    <property type="term" value="P:1-phosphatidyl-1D-myo-inositol 4,5-bisphosphate biosynthetic process"/>
    <property type="evidence" value="ECO:0000315"/>
    <property type="project" value="dictyBase"/>
</dbReference>
<dbReference type="GO" id="GO:0043327">
    <property type="term" value="P:chemotaxis to cAMP"/>
    <property type="evidence" value="ECO:0000315"/>
    <property type="project" value="dictyBase"/>
</dbReference>
<dbReference type="GO" id="GO:0046854">
    <property type="term" value="P:phosphatidylinositol phosphate biosynthetic process"/>
    <property type="evidence" value="ECO:0000318"/>
    <property type="project" value="GO_Central"/>
</dbReference>
<dbReference type="GO" id="GO:0046578">
    <property type="term" value="P:regulation of Ras protein signal transduction"/>
    <property type="evidence" value="ECO:0000315"/>
    <property type="project" value="dictyBase"/>
</dbReference>
<dbReference type="CDD" id="cd00139">
    <property type="entry name" value="PIPKc"/>
    <property type="match status" value="1"/>
</dbReference>
<dbReference type="FunFam" id="3.30.800.10:FF:000009">
    <property type="entry name" value="Phosphatidylinositol 4-phosphate 5-kinase its3"/>
    <property type="match status" value="1"/>
</dbReference>
<dbReference type="Gene3D" id="3.30.810.10">
    <property type="entry name" value="2-Layer Sandwich"/>
    <property type="match status" value="1"/>
</dbReference>
<dbReference type="Gene3D" id="3.30.800.10">
    <property type="entry name" value="Phosphatidylinositol Phosphate Kinase II Beta"/>
    <property type="match status" value="1"/>
</dbReference>
<dbReference type="InterPro" id="IPR027483">
    <property type="entry name" value="PInositol-4-P-4/5-kinase_C_sf"/>
</dbReference>
<dbReference type="InterPro" id="IPR002498">
    <property type="entry name" value="PInositol-4-P-4/5-kinase_core"/>
</dbReference>
<dbReference type="InterPro" id="IPR027484">
    <property type="entry name" value="PInositol-4-P-5-kinase_N"/>
</dbReference>
<dbReference type="InterPro" id="IPR023610">
    <property type="entry name" value="PInositol-4/5-P-5/4-kinase"/>
</dbReference>
<dbReference type="PANTHER" id="PTHR23086:SF142">
    <property type="entry name" value="PHOSPHATIDYLINOSITOL PHOSPHATE KINASE DDB_G0267588-RELATED"/>
    <property type="match status" value="1"/>
</dbReference>
<dbReference type="PANTHER" id="PTHR23086">
    <property type="entry name" value="PHOSPHATIDYLINOSITOL-4-PHOSPHATE 5-KINASE"/>
    <property type="match status" value="1"/>
</dbReference>
<dbReference type="Pfam" id="PF01504">
    <property type="entry name" value="PIP5K"/>
    <property type="match status" value="1"/>
</dbReference>
<dbReference type="SMART" id="SM00330">
    <property type="entry name" value="PIPKc"/>
    <property type="match status" value="1"/>
</dbReference>
<dbReference type="SUPFAM" id="SSF56104">
    <property type="entry name" value="SAICAR synthase-like"/>
    <property type="match status" value="1"/>
</dbReference>
<dbReference type="PROSITE" id="PS51455">
    <property type="entry name" value="PIPK"/>
    <property type="match status" value="1"/>
</dbReference>
<keyword id="KW-0067">ATP-binding</keyword>
<keyword id="KW-0418">Kinase</keyword>
<keyword id="KW-0547">Nucleotide-binding</keyword>
<keyword id="KW-0597">Phosphoprotein</keyword>
<keyword id="KW-1185">Reference proteome</keyword>
<keyword id="KW-0808">Transferase</keyword>
<gene>
    <name type="ORF">DDB_G0267588</name>
</gene>
<sequence length="719" mass="80506">MNTIDTVVPEMNPALSESIVFAPIRTGEEGEKIPIIPINAALSESIVFSPIPPPPSTTDNTTNTTTTTIETTATDNTNDTEEKQENIENNNNNNNSSISSPNSIDGANKKDSIELEEDKEHSIKRKDGSLGDVVDNEKIIPNSLDSDAPEETSNLNKKSEINIKQVLKNPSFDATNDNHNPQEVDNTDNPDKPTTPRQTTTTTTTTTTTTSTNSTSNKLPNNGDNTVSFDEKFDPNVSHSNLNDDYKASGSSDSPNRVRLNTSQRLKMYKQKSEKRLSHRPKSIKLEHKKNVLGEIIYKGHPSWALMLNIQTGIRNAVGKSMGTEGGVNAKTPQQYHTLRKPSEFKRKEDFYVSPKTQRFESAGTAMTNAHSTGAFKFKDYCPNAFRYLRYLFGIDTADFMVSLCNTLKNGENALRELPTPGKSGSLFFFSHDMKFIIKTIPKDEAKLLRDILPSYLEHIQSNPNSLLPRFFGLYRVKPHSGRQVRFVIMGNLFPTKKKIHERYDLKGSVVGREASVDEKKSDSVTFKDIDFRNRKQKIFLGPGKKQSFIDQIKRDCKLLQSLNIMDYSLLIGIHYPHRENEPPSPSLLRSTLEDSSDFESPSMEQSSAGQQQQQRGSGNYDNSGAGRDSTTGGAAPKENDEIYISAFQQDEGGIKSQGGDTEEHYFLGIIDILMLYSLRKKVEHTYKTLKFGAKQEISSVSPDEYSERFQEFLSTIIE</sequence>
<evidence type="ECO:0000255" key="1">
    <source>
        <dbReference type="PROSITE-ProRule" id="PRU00781"/>
    </source>
</evidence>
<evidence type="ECO:0000256" key="2">
    <source>
        <dbReference type="SAM" id="MobiDB-lite"/>
    </source>
</evidence>
<evidence type="ECO:0000269" key="3">
    <source>
    </source>
</evidence>
<evidence type="ECO:0000305" key="4">
    <source>
    </source>
</evidence>
<feature type="chain" id="PRO_0000393332" description="Probable phosphatidylinositol phosphate kinase DDB_G0267588">
    <location>
        <begin position="1"/>
        <end position="719"/>
    </location>
</feature>
<feature type="domain" description="PIPK" evidence="1">
    <location>
        <begin position="316"/>
        <end position="718"/>
    </location>
</feature>
<feature type="region of interest" description="Disordered" evidence="2">
    <location>
        <begin position="47"/>
        <end position="261"/>
    </location>
</feature>
<feature type="region of interest" description="Disordered" evidence="2">
    <location>
        <begin position="579"/>
        <end position="638"/>
    </location>
</feature>
<feature type="compositionally biased region" description="Low complexity" evidence="2">
    <location>
        <begin position="57"/>
        <end position="77"/>
    </location>
</feature>
<feature type="compositionally biased region" description="Low complexity" evidence="2">
    <location>
        <begin position="87"/>
        <end position="104"/>
    </location>
</feature>
<feature type="compositionally biased region" description="Basic and acidic residues" evidence="2">
    <location>
        <begin position="107"/>
        <end position="129"/>
    </location>
</feature>
<feature type="compositionally biased region" description="Polar residues" evidence="2">
    <location>
        <begin position="172"/>
        <end position="184"/>
    </location>
</feature>
<feature type="compositionally biased region" description="Low complexity" evidence="2">
    <location>
        <begin position="199"/>
        <end position="217"/>
    </location>
</feature>
<feature type="compositionally biased region" description="Polar residues" evidence="2">
    <location>
        <begin position="218"/>
        <end position="228"/>
    </location>
</feature>
<feature type="compositionally biased region" description="Polar residues" evidence="2">
    <location>
        <begin position="248"/>
        <end position="261"/>
    </location>
</feature>
<feature type="compositionally biased region" description="Low complexity" evidence="2">
    <location>
        <begin position="606"/>
        <end position="619"/>
    </location>
</feature>
<feature type="modified residue" description="Phosphothreonine" evidence="4">
    <location>
        <position position="262"/>
    </location>
</feature>
<accession>Q55GN6</accession>
<comment type="function">
    <text evidence="3">May be involved in signaling events that underlie chemotaxis via the chemoattractant-mediated pkgB phosphorylation.</text>
</comment>
<comment type="PTM">
    <text evidence="4">Phosphorylated at Thr-262 by pkgB.</text>
</comment>